<organism>
    <name type="scientific">Zymomonas mobilis subsp. mobilis (strain ATCC 31821 / ZM4 / CP4)</name>
    <dbReference type="NCBI Taxonomy" id="264203"/>
    <lineage>
        <taxon>Bacteria</taxon>
        <taxon>Pseudomonadati</taxon>
        <taxon>Pseudomonadota</taxon>
        <taxon>Alphaproteobacteria</taxon>
        <taxon>Sphingomonadales</taxon>
        <taxon>Zymomonadaceae</taxon>
        <taxon>Zymomonas</taxon>
    </lineage>
</organism>
<comment type="function">
    <text evidence="1">Specifically methylates the uridine in position 2552 of 23S rRNA at the 2'-O position of the ribose in the fully assembled 50S ribosomal subunit.</text>
</comment>
<comment type="catalytic activity">
    <reaction evidence="1">
        <text>uridine(2552) in 23S rRNA + S-adenosyl-L-methionine = 2'-O-methyluridine(2552) in 23S rRNA + S-adenosyl-L-homocysteine + H(+)</text>
        <dbReference type="Rhea" id="RHEA:42720"/>
        <dbReference type="Rhea" id="RHEA-COMP:10202"/>
        <dbReference type="Rhea" id="RHEA-COMP:10203"/>
        <dbReference type="ChEBI" id="CHEBI:15378"/>
        <dbReference type="ChEBI" id="CHEBI:57856"/>
        <dbReference type="ChEBI" id="CHEBI:59789"/>
        <dbReference type="ChEBI" id="CHEBI:65315"/>
        <dbReference type="ChEBI" id="CHEBI:74478"/>
        <dbReference type="EC" id="2.1.1.166"/>
    </reaction>
</comment>
<comment type="subcellular location">
    <subcellularLocation>
        <location evidence="1">Cytoplasm</location>
    </subcellularLocation>
</comment>
<comment type="similarity">
    <text evidence="1">Belongs to the class I-like SAM-binding methyltransferase superfamily. RNA methyltransferase RlmE family.</text>
</comment>
<gene>
    <name evidence="1" type="primary">rlmE</name>
    <name evidence="1" type="synonym">ftsJ</name>
    <name evidence="1" type="synonym">rrmJ</name>
    <name type="ordered locus">ZMO0402</name>
</gene>
<reference key="1">
    <citation type="journal article" date="2005" name="Nat. Biotechnol.">
        <title>The genome sequence of the ethanologenic bacterium Zymomonas mobilis ZM4.</title>
        <authorList>
            <person name="Seo J.-S."/>
            <person name="Chong H."/>
            <person name="Park H.S."/>
            <person name="Yoon K.-O."/>
            <person name="Jung C."/>
            <person name="Kim J.J."/>
            <person name="Hong J.H."/>
            <person name="Kim H."/>
            <person name="Kim J.-H."/>
            <person name="Kil J.-I."/>
            <person name="Park C.J."/>
            <person name="Oh H.-M."/>
            <person name="Lee J.-S."/>
            <person name="Jin S.-J."/>
            <person name="Um H.-W."/>
            <person name="Lee H.-J."/>
            <person name="Oh S.-J."/>
            <person name="Kim J.Y."/>
            <person name="Kang H.L."/>
            <person name="Lee S.Y."/>
            <person name="Lee K.J."/>
            <person name="Kang H.S."/>
        </authorList>
    </citation>
    <scope>NUCLEOTIDE SEQUENCE [LARGE SCALE GENOMIC DNA]</scope>
    <source>
        <strain>ATCC 31821 / ZM4 / CP4</strain>
    </source>
</reference>
<proteinExistence type="inferred from homology"/>
<accession>Q5NQH8</accession>
<keyword id="KW-0963">Cytoplasm</keyword>
<keyword id="KW-0489">Methyltransferase</keyword>
<keyword id="KW-1185">Reference proteome</keyword>
<keyword id="KW-0698">rRNA processing</keyword>
<keyword id="KW-0949">S-adenosyl-L-methionine</keyword>
<keyword id="KW-0808">Transferase</keyword>
<feature type="chain" id="PRO_0000155562" description="Ribosomal RNA large subunit methyltransferase E">
    <location>
        <begin position="1"/>
        <end position="221"/>
    </location>
</feature>
<feature type="active site" description="Proton acceptor" evidence="1">
    <location>
        <position position="171"/>
    </location>
</feature>
<feature type="binding site" evidence="1">
    <location>
        <position position="72"/>
    </location>
    <ligand>
        <name>S-adenosyl-L-methionine</name>
        <dbReference type="ChEBI" id="CHEBI:59789"/>
    </ligand>
</feature>
<feature type="binding site" evidence="1">
    <location>
        <position position="74"/>
    </location>
    <ligand>
        <name>S-adenosyl-L-methionine</name>
        <dbReference type="ChEBI" id="CHEBI:59789"/>
    </ligand>
</feature>
<feature type="binding site" evidence="1">
    <location>
        <position position="91"/>
    </location>
    <ligand>
        <name>S-adenosyl-L-methionine</name>
        <dbReference type="ChEBI" id="CHEBI:59789"/>
    </ligand>
</feature>
<feature type="binding site" evidence="1">
    <location>
        <position position="107"/>
    </location>
    <ligand>
        <name>S-adenosyl-L-methionine</name>
        <dbReference type="ChEBI" id="CHEBI:59789"/>
    </ligand>
</feature>
<feature type="binding site" evidence="1">
    <location>
        <position position="131"/>
    </location>
    <ligand>
        <name>S-adenosyl-L-methionine</name>
        <dbReference type="ChEBI" id="CHEBI:59789"/>
    </ligand>
</feature>
<evidence type="ECO:0000255" key="1">
    <source>
        <dbReference type="HAMAP-Rule" id="MF_01547"/>
    </source>
</evidence>
<name>RLME_ZYMMO</name>
<protein>
    <recommendedName>
        <fullName evidence="1">Ribosomal RNA large subunit methyltransferase E</fullName>
        <ecNumber evidence="1">2.1.1.166</ecNumber>
    </recommendedName>
    <alternativeName>
        <fullName evidence="1">23S rRNA Um2552 methyltransferase</fullName>
    </alternativeName>
    <alternativeName>
        <fullName evidence="1">rRNA (uridine-2'-O-)-methyltransferase</fullName>
    </alternativeName>
</protein>
<dbReference type="EC" id="2.1.1.166" evidence="1"/>
<dbReference type="EMBL" id="AE008692">
    <property type="protein sequence ID" value="AAV89026.1"/>
    <property type="molecule type" value="Genomic_DNA"/>
</dbReference>
<dbReference type="RefSeq" id="WP_011240319.1">
    <property type="nucleotide sequence ID" value="NZ_CP035711.1"/>
</dbReference>
<dbReference type="SMR" id="Q5NQH8"/>
<dbReference type="STRING" id="264203.ZMO0402"/>
<dbReference type="KEGG" id="zmo:ZMO0402"/>
<dbReference type="eggNOG" id="COG0293">
    <property type="taxonomic scope" value="Bacteria"/>
</dbReference>
<dbReference type="HOGENOM" id="CLU_009422_4_0_5"/>
<dbReference type="Proteomes" id="UP000001173">
    <property type="component" value="Chromosome"/>
</dbReference>
<dbReference type="GO" id="GO:0005737">
    <property type="term" value="C:cytoplasm"/>
    <property type="evidence" value="ECO:0007669"/>
    <property type="project" value="UniProtKB-SubCell"/>
</dbReference>
<dbReference type="GO" id="GO:0008650">
    <property type="term" value="F:rRNA (uridine-2'-O-)-methyltransferase activity"/>
    <property type="evidence" value="ECO:0007669"/>
    <property type="project" value="UniProtKB-UniRule"/>
</dbReference>
<dbReference type="Gene3D" id="3.40.50.150">
    <property type="entry name" value="Vaccinia Virus protein VP39"/>
    <property type="match status" value="1"/>
</dbReference>
<dbReference type="HAMAP" id="MF_01547">
    <property type="entry name" value="RNA_methyltr_E"/>
    <property type="match status" value="1"/>
</dbReference>
<dbReference type="InterPro" id="IPR050082">
    <property type="entry name" value="RNA_methyltr_RlmE"/>
</dbReference>
<dbReference type="InterPro" id="IPR002877">
    <property type="entry name" value="RNA_MeTrfase_FtsJ_dom"/>
</dbReference>
<dbReference type="InterPro" id="IPR015507">
    <property type="entry name" value="rRNA-MeTfrase_E"/>
</dbReference>
<dbReference type="InterPro" id="IPR029063">
    <property type="entry name" value="SAM-dependent_MTases_sf"/>
</dbReference>
<dbReference type="PANTHER" id="PTHR10920">
    <property type="entry name" value="RIBOSOMAL RNA METHYLTRANSFERASE"/>
    <property type="match status" value="1"/>
</dbReference>
<dbReference type="PANTHER" id="PTHR10920:SF18">
    <property type="entry name" value="RRNA METHYLTRANSFERASE 2, MITOCHONDRIAL"/>
    <property type="match status" value="1"/>
</dbReference>
<dbReference type="Pfam" id="PF01728">
    <property type="entry name" value="FtsJ"/>
    <property type="match status" value="1"/>
</dbReference>
<dbReference type="PIRSF" id="PIRSF005461">
    <property type="entry name" value="23S_rRNA_mtase"/>
    <property type="match status" value="1"/>
</dbReference>
<dbReference type="SUPFAM" id="SSF53335">
    <property type="entry name" value="S-adenosyl-L-methionine-dependent methyltransferases"/>
    <property type="match status" value="1"/>
</dbReference>
<sequence length="221" mass="24278">MKTPGHQRVKTARRRTAASTRWLERQLNDPYVQKAQAEGYRSRAAFKLIELDERFSLLKNARRIIDLGIAPGGWSQVARKKAPQAKIVGIDLLEAAPIEGVTIFQNDFTDPEAQKKLIEALGGAADLVLSDMAANTIGHAQTDHLRTMALVEEAAVFASETLREGGSFVAKVLAGGADKDLVALLKRLFGQVKHAKPPASRRESSEWYVIAQNFRGEAYQG</sequence>